<comment type="catalytic activity">
    <reaction>
        <text>O-phospho-L-seryl-[protein] + H2O = L-seryl-[protein] + phosphate</text>
        <dbReference type="Rhea" id="RHEA:20629"/>
        <dbReference type="Rhea" id="RHEA-COMP:9863"/>
        <dbReference type="Rhea" id="RHEA-COMP:11604"/>
        <dbReference type="ChEBI" id="CHEBI:15377"/>
        <dbReference type="ChEBI" id="CHEBI:29999"/>
        <dbReference type="ChEBI" id="CHEBI:43474"/>
        <dbReference type="ChEBI" id="CHEBI:83421"/>
        <dbReference type="EC" id="3.1.3.16"/>
    </reaction>
</comment>
<comment type="catalytic activity">
    <reaction>
        <text>O-phospho-L-threonyl-[protein] + H2O = L-threonyl-[protein] + phosphate</text>
        <dbReference type="Rhea" id="RHEA:47004"/>
        <dbReference type="Rhea" id="RHEA-COMP:11060"/>
        <dbReference type="Rhea" id="RHEA-COMP:11605"/>
        <dbReference type="ChEBI" id="CHEBI:15377"/>
        <dbReference type="ChEBI" id="CHEBI:30013"/>
        <dbReference type="ChEBI" id="CHEBI:43474"/>
        <dbReference type="ChEBI" id="CHEBI:61977"/>
        <dbReference type="EC" id="3.1.3.16"/>
    </reaction>
</comment>
<comment type="cofactor">
    <cofactor evidence="1">
        <name>Mg(2+)</name>
        <dbReference type="ChEBI" id="CHEBI:18420"/>
    </cofactor>
    <cofactor evidence="1">
        <name>Mn(2+)</name>
        <dbReference type="ChEBI" id="CHEBI:29035"/>
    </cofactor>
    <text evidence="1">Binds 2 magnesium or manganese ions per subunit.</text>
</comment>
<comment type="alternative products">
    <event type="alternative splicing"/>
    <isoform>
        <id>Q9LVQ8-1</id>
        <name>1</name>
        <sequence type="displayed"/>
    </isoform>
    <isoform>
        <id>Q9LVQ8-2</id>
        <name>2</name>
        <sequence type="described" ref="VSP_036777"/>
    </isoform>
</comment>
<comment type="miscellaneous">
    <molecule>Isoform 2</molecule>
    <text evidence="4">May be due to a competing acceptor splice site.</text>
</comment>
<comment type="similarity">
    <text evidence="4">Belongs to the PP2C family.</text>
</comment>
<comment type="sequence caution" evidence="4">
    <conflict type="miscellaneous discrepancy">
        <sequence resource="EMBL" id="BX833253"/>
    </conflict>
    <text>Sequencing errors.</text>
</comment>
<sequence>MSATALSRLNPVSQFGFQRIVAGKSKSFFSNSGQRRLFSDSSRFRQAMAASGSLPVFGDACLDDLVTTCSNGLDFTKKRSSGGSFTINCPVASMRLGKRGGMMKNRLVCHYSVVDPLEKSRALFGTLSKSVHTSPMACFSVGPAHELSSLNGGSQESPPTTTTSLKSLRLVSGSCYLPHPEKEATGGEDAHFICDEEQAIGVADGVGGWAEVGVNAGLFSRELMSYSVSAIQEQHKGSSIDPLVVLEKAHSQTKAKGSSTACIIVLKDKGLHAINLGDSGFTVVREGTTVFQSPVQQHGFNFTYQLESGNSADVPSSGQVFTIDVQSGDVIVAGTDGVYDNLYNEEITGVVVSSVRAGLDPKGTAQKIAELARQRAVDKKRQSPFATAAQEAGYRYYGGKLDDITAVVSYVTSS</sequence>
<evidence type="ECO:0000250" key="1"/>
<evidence type="ECO:0000255" key="2">
    <source>
        <dbReference type="PROSITE-ProRule" id="PRU01082"/>
    </source>
</evidence>
<evidence type="ECO:0000303" key="3">
    <source>
    </source>
</evidence>
<evidence type="ECO:0000305" key="4"/>
<keyword id="KW-0025">Alternative splicing</keyword>
<keyword id="KW-0378">Hydrolase</keyword>
<keyword id="KW-0460">Magnesium</keyword>
<keyword id="KW-0464">Manganese</keyword>
<keyword id="KW-0479">Metal-binding</keyword>
<keyword id="KW-0904">Protein phosphatase</keyword>
<keyword id="KW-1185">Reference proteome</keyword>
<reference key="1">
    <citation type="journal article" date="2000" name="DNA Res.">
        <title>Structural analysis of Arabidopsis thaliana chromosome 5. X. Sequence features of the regions of 3,076,755 bp covered by sixty P1 and TAC clones.</title>
        <authorList>
            <person name="Sato S."/>
            <person name="Nakamura Y."/>
            <person name="Kaneko T."/>
            <person name="Katoh T."/>
            <person name="Asamizu E."/>
            <person name="Kotani H."/>
            <person name="Tabata S."/>
        </authorList>
    </citation>
    <scope>NUCLEOTIDE SEQUENCE [LARGE SCALE GENOMIC DNA]</scope>
    <source>
        <strain>cv. Columbia</strain>
    </source>
</reference>
<reference key="2">
    <citation type="journal article" date="2017" name="Plant J.">
        <title>Araport11: a complete reannotation of the Arabidopsis thaliana reference genome.</title>
        <authorList>
            <person name="Cheng C.Y."/>
            <person name="Krishnakumar V."/>
            <person name="Chan A.P."/>
            <person name="Thibaud-Nissen F."/>
            <person name="Schobel S."/>
            <person name="Town C.D."/>
        </authorList>
    </citation>
    <scope>GENOME REANNOTATION</scope>
    <source>
        <strain>cv. Columbia</strain>
    </source>
</reference>
<reference key="3">
    <citation type="journal article" date="2002" name="Science">
        <title>Functional annotation of a full-length Arabidopsis cDNA collection.</title>
        <authorList>
            <person name="Seki M."/>
            <person name="Narusaka M."/>
            <person name="Kamiya A."/>
            <person name="Ishida J."/>
            <person name="Satou M."/>
            <person name="Sakurai T."/>
            <person name="Nakajima M."/>
            <person name="Enju A."/>
            <person name="Akiyama K."/>
            <person name="Oono Y."/>
            <person name="Muramatsu M."/>
            <person name="Hayashizaki Y."/>
            <person name="Kawai J."/>
            <person name="Carninci P."/>
            <person name="Itoh M."/>
            <person name="Ishii Y."/>
            <person name="Arakawa T."/>
            <person name="Shibata K."/>
            <person name="Shinagawa A."/>
            <person name="Shinozaki K."/>
        </authorList>
    </citation>
    <scope>NUCLEOTIDE SEQUENCE [LARGE SCALE MRNA] (ISOFORM 1)</scope>
    <source>
        <strain>cv. Columbia</strain>
    </source>
</reference>
<reference key="4">
    <citation type="journal article" date="2003" name="Science">
        <title>Empirical analysis of transcriptional activity in the Arabidopsis genome.</title>
        <authorList>
            <person name="Yamada K."/>
            <person name="Lim J."/>
            <person name="Dale J.M."/>
            <person name="Chen H."/>
            <person name="Shinn P."/>
            <person name="Palm C.J."/>
            <person name="Southwick A.M."/>
            <person name="Wu H.C."/>
            <person name="Kim C.J."/>
            <person name="Nguyen M."/>
            <person name="Pham P.K."/>
            <person name="Cheuk R.F."/>
            <person name="Karlin-Newmann G."/>
            <person name="Liu S.X."/>
            <person name="Lam B."/>
            <person name="Sakano H."/>
            <person name="Wu T."/>
            <person name="Yu G."/>
            <person name="Miranda M."/>
            <person name="Quach H.L."/>
            <person name="Tripp M."/>
            <person name="Chang C.H."/>
            <person name="Lee J.M."/>
            <person name="Toriumi M.J."/>
            <person name="Chan M.M."/>
            <person name="Tang C.C."/>
            <person name="Onodera C.S."/>
            <person name="Deng J.M."/>
            <person name="Akiyama K."/>
            <person name="Ansari Y."/>
            <person name="Arakawa T."/>
            <person name="Banh J."/>
            <person name="Banno F."/>
            <person name="Bowser L."/>
            <person name="Brooks S.Y."/>
            <person name="Carninci P."/>
            <person name="Chao Q."/>
            <person name="Choy N."/>
            <person name="Enju A."/>
            <person name="Goldsmith A.D."/>
            <person name="Gurjal M."/>
            <person name="Hansen N.F."/>
            <person name="Hayashizaki Y."/>
            <person name="Johnson-Hopson C."/>
            <person name="Hsuan V.W."/>
            <person name="Iida K."/>
            <person name="Karnes M."/>
            <person name="Khan S."/>
            <person name="Koesema E."/>
            <person name="Ishida J."/>
            <person name="Jiang P.X."/>
            <person name="Jones T."/>
            <person name="Kawai J."/>
            <person name="Kamiya A."/>
            <person name="Meyers C."/>
            <person name="Nakajima M."/>
            <person name="Narusaka M."/>
            <person name="Seki M."/>
            <person name="Sakurai T."/>
            <person name="Satou M."/>
            <person name="Tamse R."/>
            <person name="Vaysberg M."/>
            <person name="Wallender E.K."/>
            <person name="Wong C."/>
            <person name="Yamamura Y."/>
            <person name="Yuan S."/>
            <person name="Shinozaki K."/>
            <person name="Davis R.W."/>
            <person name="Theologis A."/>
            <person name="Ecker J.R."/>
        </authorList>
    </citation>
    <scope>NUCLEOTIDE SEQUENCE [LARGE SCALE MRNA] (ISOFORM 1)</scope>
    <source>
        <strain>cv. Columbia</strain>
    </source>
</reference>
<reference key="5">
    <citation type="journal article" date="2004" name="Genome Res.">
        <title>Whole genome sequence comparisons and 'full-length' cDNA sequences: a combined approach to evaluate and improve Arabidopsis genome annotation.</title>
        <authorList>
            <person name="Castelli V."/>
            <person name="Aury J.-M."/>
            <person name="Jaillon O."/>
            <person name="Wincker P."/>
            <person name="Clepet C."/>
            <person name="Menard M."/>
            <person name="Cruaud C."/>
            <person name="Quetier F."/>
            <person name="Scarpelli C."/>
            <person name="Schaechter V."/>
            <person name="Temple G."/>
            <person name="Caboche M."/>
            <person name="Weissenbach J."/>
            <person name="Salanoubat M."/>
        </authorList>
    </citation>
    <scope>NUCLEOTIDE SEQUENCE [LARGE SCALE MRNA] (ISOFORM 2)</scope>
    <source>
        <strain>cv. Columbia</strain>
    </source>
</reference>
<reference key="6">
    <citation type="journal article" date="2008" name="BMC Genomics">
        <title>Genome-wide and expression analysis of protein phosphatase 2C in rice and Arabidopsis.</title>
        <authorList>
            <person name="Xue T."/>
            <person name="Wang D."/>
            <person name="Zhang S."/>
            <person name="Ehlting J."/>
            <person name="Ni F."/>
            <person name="Jacab S."/>
            <person name="Zheng C."/>
            <person name="Zhong Y."/>
        </authorList>
    </citation>
    <scope>GENE FAMILY</scope>
    <scope>NOMENCLATURE</scope>
</reference>
<proteinExistence type="evidence at transcript level"/>
<gene>
    <name type="ordered locus">At5g66720</name>
    <name type="ORF">MSN2.11</name>
</gene>
<accession>Q9LVQ8</accession>
<accession>Q3E849</accession>
<dbReference type="EC" id="3.1.3.16"/>
<dbReference type="EMBL" id="AB018119">
    <property type="protein sequence ID" value="BAA97278.1"/>
    <property type="molecule type" value="Genomic_DNA"/>
</dbReference>
<dbReference type="EMBL" id="CP002688">
    <property type="protein sequence ID" value="AED98255.1"/>
    <property type="molecule type" value="Genomic_DNA"/>
</dbReference>
<dbReference type="EMBL" id="CP002688">
    <property type="protein sequence ID" value="AED98256.1"/>
    <property type="molecule type" value="Genomic_DNA"/>
</dbReference>
<dbReference type="EMBL" id="AK117127">
    <property type="protein sequence ID" value="BAC41805.1"/>
    <property type="molecule type" value="mRNA"/>
</dbReference>
<dbReference type="EMBL" id="AY136405">
    <property type="protein sequence ID" value="AAM97071.1"/>
    <property type="molecule type" value="mRNA"/>
</dbReference>
<dbReference type="EMBL" id="BT000228">
    <property type="protein sequence ID" value="AAN15547.1"/>
    <property type="molecule type" value="mRNA"/>
</dbReference>
<dbReference type="EMBL" id="BX833253">
    <property type="status" value="NOT_ANNOTATED_CDS"/>
    <property type="molecule type" value="mRNA"/>
</dbReference>
<dbReference type="RefSeq" id="NP_201473.1">
    <molecule id="Q9LVQ8-1"/>
    <property type="nucleotide sequence ID" value="NM_126070.4"/>
</dbReference>
<dbReference type="RefSeq" id="NP_975004.1">
    <molecule id="Q9LVQ8-2"/>
    <property type="nucleotide sequence ID" value="NM_203275.1"/>
</dbReference>
<dbReference type="SMR" id="Q9LVQ8"/>
<dbReference type="BioGRID" id="22047">
    <property type="interactions" value="12"/>
</dbReference>
<dbReference type="FunCoup" id="Q9LVQ8">
    <property type="interactions" value="1586"/>
</dbReference>
<dbReference type="IntAct" id="Q9LVQ8">
    <property type="interactions" value="12"/>
</dbReference>
<dbReference type="STRING" id="3702.Q9LVQ8"/>
<dbReference type="PaxDb" id="3702-AT5G66720.1"/>
<dbReference type="ProteomicsDB" id="250921">
    <molecule id="Q9LVQ8-1"/>
</dbReference>
<dbReference type="EnsemblPlants" id="AT5G66720.1">
    <molecule id="Q9LVQ8-1"/>
    <property type="protein sequence ID" value="AT5G66720.1"/>
    <property type="gene ID" value="AT5G66720"/>
</dbReference>
<dbReference type="EnsemblPlants" id="AT5G66720.2">
    <molecule id="Q9LVQ8-2"/>
    <property type="protein sequence ID" value="AT5G66720.2"/>
    <property type="gene ID" value="AT5G66720"/>
</dbReference>
<dbReference type="GeneID" id="836805"/>
<dbReference type="Gramene" id="AT5G66720.1">
    <molecule id="Q9LVQ8-1"/>
    <property type="protein sequence ID" value="AT5G66720.1"/>
    <property type="gene ID" value="AT5G66720"/>
</dbReference>
<dbReference type="Gramene" id="AT5G66720.2">
    <molecule id="Q9LVQ8-2"/>
    <property type="protein sequence ID" value="AT5G66720.2"/>
    <property type="gene ID" value="AT5G66720"/>
</dbReference>
<dbReference type="KEGG" id="ath:AT5G66720"/>
<dbReference type="Araport" id="AT5G66720"/>
<dbReference type="TAIR" id="AT5G66720"/>
<dbReference type="eggNOG" id="KOG1379">
    <property type="taxonomic scope" value="Eukaryota"/>
</dbReference>
<dbReference type="InParanoid" id="Q9LVQ8"/>
<dbReference type="OMA" id="VCHYSAI"/>
<dbReference type="OrthoDB" id="60843at2759"/>
<dbReference type="PhylomeDB" id="Q9LVQ8"/>
<dbReference type="PRO" id="PR:Q9LVQ8"/>
<dbReference type="Proteomes" id="UP000006548">
    <property type="component" value="Chromosome 5"/>
</dbReference>
<dbReference type="ExpressionAtlas" id="Q9LVQ8">
    <property type="expression patterns" value="baseline and differential"/>
</dbReference>
<dbReference type="GO" id="GO:0009507">
    <property type="term" value="C:chloroplast"/>
    <property type="evidence" value="ECO:0007005"/>
    <property type="project" value="TAIR"/>
</dbReference>
<dbReference type="GO" id="GO:0009570">
    <property type="term" value="C:chloroplast stroma"/>
    <property type="evidence" value="ECO:0007005"/>
    <property type="project" value="TAIR"/>
</dbReference>
<dbReference type="GO" id="GO:0046872">
    <property type="term" value="F:metal ion binding"/>
    <property type="evidence" value="ECO:0007669"/>
    <property type="project" value="UniProtKB-KW"/>
</dbReference>
<dbReference type="GO" id="GO:0004722">
    <property type="term" value="F:protein serine/threonine phosphatase activity"/>
    <property type="evidence" value="ECO:0007669"/>
    <property type="project" value="UniProtKB-EC"/>
</dbReference>
<dbReference type="FunFam" id="3.60.40.10:FF:000138">
    <property type="entry name" value="5-azacytidine resistance protein azr1"/>
    <property type="match status" value="1"/>
</dbReference>
<dbReference type="Gene3D" id="3.60.40.10">
    <property type="entry name" value="PPM-type phosphatase domain"/>
    <property type="match status" value="2"/>
</dbReference>
<dbReference type="InterPro" id="IPR036457">
    <property type="entry name" value="PPM-type-like_dom_sf"/>
</dbReference>
<dbReference type="InterPro" id="IPR001932">
    <property type="entry name" value="PPM-type_phosphatase-like_dom"/>
</dbReference>
<dbReference type="InterPro" id="IPR039123">
    <property type="entry name" value="PPTC7"/>
</dbReference>
<dbReference type="PANTHER" id="PTHR12320">
    <property type="entry name" value="PROTEIN PHOSPHATASE 2C"/>
    <property type="match status" value="1"/>
</dbReference>
<dbReference type="PANTHER" id="PTHR12320:SF49">
    <property type="entry name" value="PROTEIN PHOSPHATASE 2C 80-RELATED"/>
    <property type="match status" value="1"/>
</dbReference>
<dbReference type="Pfam" id="PF13672">
    <property type="entry name" value="PP2C_2"/>
    <property type="match status" value="1"/>
</dbReference>
<dbReference type="SMART" id="SM00331">
    <property type="entry name" value="PP2C_SIG"/>
    <property type="match status" value="1"/>
</dbReference>
<dbReference type="SMART" id="SM00332">
    <property type="entry name" value="PP2Cc"/>
    <property type="match status" value="1"/>
</dbReference>
<dbReference type="SUPFAM" id="SSF81606">
    <property type="entry name" value="PP2C-like"/>
    <property type="match status" value="1"/>
</dbReference>
<dbReference type="PROSITE" id="PS51746">
    <property type="entry name" value="PPM_2"/>
    <property type="match status" value="1"/>
</dbReference>
<organism>
    <name type="scientific">Arabidopsis thaliana</name>
    <name type="common">Mouse-ear cress</name>
    <dbReference type="NCBI Taxonomy" id="3702"/>
    <lineage>
        <taxon>Eukaryota</taxon>
        <taxon>Viridiplantae</taxon>
        <taxon>Streptophyta</taxon>
        <taxon>Embryophyta</taxon>
        <taxon>Tracheophyta</taxon>
        <taxon>Spermatophyta</taxon>
        <taxon>Magnoliopsida</taxon>
        <taxon>eudicotyledons</taxon>
        <taxon>Gunneridae</taxon>
        <taxon>Pentapetalae</taxon>
        <taxon>rosids</taxon>
        <taxon>malvids</taxon>
        <taxon>Brassicales</taxon>
        <taxon>Brassicaceae</taxon>
        <taxon>Camelineae</taxon>
        <taxon>Arabidopsis</taxon>
    </lineage>
</organism>
<protein>
    <recommendedName>
        <fullName>Probable protein phosphatase 2C 80</fullName>
        <shortName>AtPP2C80</shortName>
        <ecNumber>3.1.3.16</ecNumber>
    </recommendedName>
</protein>
<feature type="chain" id="PRO_0000367999" description="Probable protein phosphatase 2C 80">
    <location>
        <begin position="1"/>
        <end position="414"/>
    </location>
</feature>
<feature type="domain" description="PPM-type phosphatase" evidence="2">
    <location>
        <begin position="174"/>
        <end position="411"/>
    </location>
</feature>
<feature type="binding site" evidence="1">
    <location>
        <position position="204"/>
    </location>
    <ligand>
        <name>Mn(2+)</name>
        <dbReference type="ChEBI" id="CHEBI:29035"/>
        <label>1</label>
    </ligand>
</feature>
<feature type="binding site" evidence="1">
    <location>
        <position position="204"/>
    </location>
    <ligand>
        <name>Mn(2+)</name>
        <dbReference type="ChEBI" id="CHEBI:29035"/>
        <label>2</label>
    </ligand>
</feature>
<feature type="binding site" evidence="1">
    <location>
        <position position="205"/>
    </location>
    <ligand>
        <name>Mn(2+)</name>
        <dbReference type="ChEBI" id="CHEBI:29035"/>
        <label>1</label>
    </ligand>
</feature>
<feature type="binding site" evidence="1">
    <location>
        <position position="336"/>
    </location>
    <ligand>
        <name>Mn(2+)</name>
        <dbReference type="ChEBI" id="CHEBI:29035"/>
        <label>2</label>
    </ligand>
</feature>
<feature type="binding site" evidence="1">
    <location>
        <position position="402"/>
    </location>
    <ligand>
        <name>Mn(2+)</name>
        <dbReference type="ChEBI" id="CHEBI:29035"/>
        <label>2</label>
    </ligand>
</feature>
<feature type="splice variant" id="VSP_036777" description="In isoform 2." evidence="3">
    <location>
        <begin position="167"/>
        <end position="169"/>
    </location>
</feature>
<name>P2C80_ARATH</name>